<geneLocation type="chloroplast"/>
<reference key="1">
    <citation type="journal article" date="1995" name="Plant Mol. Biol. Rep.">
        <title>Complete nucleotide sequence of the Porphyra purpurea chloroplast genome.</title>
        <authorList>
            <person name="Reith M.E."/>
            <person name="Munholland J."/>
        </authorList>
    </citation>
    <scope>NUCLEOTIDE SEQUENCE [LARGE SCALE GENOMIC DNA]</scope>
    <source>
        <strain>Avonport</strain>
    </source>
</reference>
<dbReference type="EMBL" id="U38804">
    <property type="protein sequence ID" value="AAC08191.1"/>
    <property type="molecule type" value="Genomic_DNA"/>
</dbReference>
<dbReference type="PIR" id="S73226">
    <property type="entry name" value="S73226"/>
</dbReference>
<dbReference type="RefSeq" id="NP_053915.1">
    <property type="nucleotide sequence ID" value="NC_000925.1"/>
</dbReference>
<dbReference type="SMR" id="P51305"/>
<dbReference type="GeneID" id="809934"/>
<dbReference type="GO" id="GO:0009507">
    <property type="term" value="C:chloroplast"/>
    <property type="evidence" value="ECO:0007669"/>
    <property type="project" value="UniProtKB-SubCell"/>
</dbReference>
<dbReference type="GO" id="GO:0022627">
    <property type="term" value="C:cytosolic small ribosomal subunit"/>
    <property type="evidence" value="ECO:0007669"/>
    <property type="project" value="TreeGrafter"/>
</dbReference>
<dbReference type="GO" id="GO:0019843">
    <property type="term" value="F:rRNA binding"/>
    <property type="evidence" value="ECO:0007669"/>
    <property type="project" value="UniProtKB-UniRule"/>
</dbReference>
<dbReference type="GO" id="GO:0003735">
    <property type="term" value="F:structural constituent of ribosome"/>
    <property type="evidence" value="ECO:0007669"/>
    <property type="project" value="InterPro"/>
</dbReference>
<dbReference type="GO" id="GO:0006412">
    <property type="term" value="P:translation"/>
    <property type="evidence" value="ECO:0007669"/>
    <property type="project" value="UniProtKB-UniRule"/>
</dbReference>
<dbReference type="CDD" id="cd00364">
    <property type="entry name" value="Ribosomal_uS17"/>
    <property type="match status" value="1"/>
</dbReference>
<dbReference type="Gene3D" id="2.40.50.140">
    <property type="entry name" value="Nucleic acid-binding proteins"/>
    <property type="match status" value="1"/>
</dbReference>
<dbReference type="HAMAP" id="MF_01345_B">
    <property type="entry name" value="Ribosomal_uS17_B"/>
    <property type="match status" value="1"/>
</dbReference>
<dbReference type="InterPro" id="IPR012340">
    <property type="entry name" value="NA-bd_OB-fold"/>
</dbReference>
<dbReference type="InterPro" id="IPR000266">
    <property type="entry name" value="Ribosomal_uS17"/>
</dbReference>
<dbReference type="InterPro" id="IPR019984">
    <property type="entry name" value="Ribosomal_uS17_bact/chlr"/>
</dbReference>
<dbReference type="InterPro" id="IPR019979">
    <property type="entry name" value="Ribosomal_uS17_CS"/>
</dbReference>
<dbReference type="NCBIfam" id="NF004123">
    <property type="entry name" value="PRK05610.1"/>
    <property type="match status" value="1"/>
</dbReference>
<dbReference type="NCBIfam" id="TIGR03635">
    <property type="entry name" value="uS17_bact"/>
    <property type="match status" value="1"/>
</dbReference>
<dbReference type="PANTHER" id="PTHR10744">
    <property type="entry name" value="40S RIBOSOMAL PROTEIN S11 FAMILY MEMBER"/>
    <property type="match status" value="1"/>
</dbReference>
<dbReference type="PANTHER" id="PTHR10744:SF1">
    <property type="entry name" value="SMALL RIBOSOMAL SUBUNIT PROTEIN US17M"/>
    <property type="match status" value="1"/>
</dbReference>
<dbReference type="Pfam" id="PF00366">
    <property type="entry name" value="Ribosomal_S17"/>
    <property type="match status" value="1"/>
</dbReference>
<dbReference type="PRINTS" id="PR00973">
    <property type="entry name" value="RIBOSOMALS17"/>
</dbReference>
<dbReference type="SUPFAM" id="SSF50249">
    <property type="entry name" value="Nucleic acid-binding proteins"/>
    <property type="match status" value="1"/>
</dbReference>
<dbReference type="PROSITE" id="PS00056">
    <property type="entry name" value="RIBOSOMAL_S17"/>
    <property type="match status" value="1"/>
</dbReference>
<accession>P51305</accession>
<gene>
    <name type="primary">rps17</name>
</gene>
<feature type="chain" id="PRO_0000128508" description="Small ribosomal subunit protein uS17c">
    <location>
        <begin position="1"/>
        <end position="83"/>
    </location>
</feature>
<protein>
    <recommendedName>
        <fullName evidence="2">Small ribosomal subunit protein uS17c</fullName>
    </recommendedName>
    <alternativeName>
        <fullName>30S ribosomal protein S17, chloroplastic</fullName>
    </alternativeName>
</protein>
<keyword id="KW-0150">Chloroplast</keyword>
<keyword id="KW-0934">Plastid</keyword>
<keyword id="KW-0687">Ribonucleoprotein</keyword>
<keyword id="KW-0689">Ribosomal protein</keyword>
<keyword id="KW-0694">RNA-binding</keyword>
<keyword id="KW-0699">rRNA-binding</keyword>
<name>RR17_PORPU</name>
<comment type="function">
    <text evidence="1">One of the primary rRNA binding proteins, it binds specifically to the 5'-end of 16S ribosomal RNA.</text>
</comment>
<comment type="subunit">
    <text evidence="1">Part of the 30S ribosomal subunit.</text>
</comment>
<comment type="subcellular location">
    <subcellularLocation>
        <location>Plastid</location>
        <location>Chloroplast</location>
    </subcellularLocation>
</comment>
<comment type="similarity">
    <text evidence="2">Belongs to the universal ribosomal protein uS17 family.</text>
</comment>
<proteinExistence type="inferred from homology"/>
<evidence type="ECO:0000250" key="1"/>
<evidence type="ECO:0000305" key="2"/>
<organism>
    <name type="scientific">Porphyra purpurea</name>
    <name type="common">Red seaweed</name>
    <name type="synonym">Ulva purpurea</name>
    <dbReference type="NCBI Taxonomy" id="2787"/>
    <lineage>
        <taxon>Eukaryota</taxon>
        <taxon>Rhodophyta</taxon>
        <taxon>Bangiophyceae</taxon>
        <taxon>Bangiales</taxon>
        <taxon>Bangiaceae</taxon>
        <taxon>Porphyra</taxon>
    </lineage>
</organism>
<sequence length="83" mass="9552">MPLKETTGKVVSDKMNKTIVVAVENRISHRKYAKTMTRTKKYKAHDENNECAVGDIVTIQETRPLSRTKCWTMVNILSKSFHN</sequence>